<reference key="1">
    <citation type="journal article" date="2002" name="Nucleic Acids Res.">
        <title>Genome sequence of Oceanobacillus iheyensis isolated from the Iheya Ridge and its unexpected adaptive capabilities to extreme environments.</title>
        <authorList>
            <person name="Takami H."/>
            <person name="Takaki Y."/>
            <person name="Uchiyama I."/>
        </authorList>
    </citation>
    <scope>NUCLEOTIDE SEQUENCE [LARGE SCALE GENOMIC DNA]</scope>
    <source>
        <strain>DSM 14371 / CIP 107618 / JCM 11309 / KCTC 3954 / HTE831</strain>
    </source>
</reference>
<accession>Q8EPW8</accession>
<keyword id="KW-0963">Cytoplasm</keyword>
<keyword id="KW-0456">Lyase</keyword>
<keyword id="KW-1185">Reference proteome</keyword>
<keyword id="KW-0704">Schiff base</keyword>
<feature type="chain" id="PRO_0000057250" description="Deoxyribose-phosphate aldolase 1">
    <location>
        <begin position="1"/>
        <end position="221"/>
    </location>
</feature>
<feature type="active site" description="Proton donor/acceptor" evidence="1">
    <location>
        <position position="89"/>
    </location>
</feature>
<feature type="active site" description="Schiff-base intermediate with acetaldehyde" evidence="1">
    <location>
        <position position="152"/>
    </location>
</feature>
<feature type="active site" description="Proton donor/acceptor" evidence="1">
    <location>
        <position position="181"/>
    </location>
</feature>
<comment type="function">
    <text evidence="1">Catalyzes a reversible aldol reaction between acetaldehyde and D-glyceraldehyde 3-phosphate to generate 2-deoxy-D-ribose 5-phosphate.</text>
</comment>
<comment type="catalytic activity">
    <reaction evidence="1">
        <text>2-deoxy-D-ribose 5-phosphate = D-glyceraldehyde 3-phosphate + acetaldehyde</text>
        <dbReference type="Rhea" id="RHEA:12821"/>
        <dbReference type="ChEBI" id="CHEBI:15343"/>
        <dbReference type="ChEBI" id="CHEBI:59776"/>
        <dbReference type="ChEBI" id="CHEBI:62877"/>
        <dbReference type="EC" id="4.1.2.4"/>
    </reaction>
</comment>
<comment type="pathway">
    <text evidence="1">Carbohydrate degradation; 2-deoxy-D-ribose 1-phosphate degradation; D-glyceraldehyde 3-phosphate and acetaldehyde from 2-deoxy-alpha-D-ribose 1-phosphate: step 2/2.</text>
</comment>
<comment type="subcellular location">
    <subcellularLocation>
        <location evidence="1">Cytoplasm</location>
    </subcellularLocation>
</comment>
<comment type="similarity">
    <text evidence="1 2">Belongs to the DeoC/FbaB aldolase family. DeoC type 1 subfamily.</text>
</comment>
<proteinExistence type="inferred from homology"/>
<name>DEOC1_OCEIH</name>
<organism>
    <name type="scientific">Oceanobacillus iheyensis (strain DSM 14371 / CIP 107618 / JCM 11309 / KCTC 3954 / HTE831)</name>
    <dbReference type="NCBI Taxonomy" id="221109"/>
    <lineage>
        <taxon>Bacteria</taxon>
        <taxon>Bacillati</taxon>
        <taxon>Bacillota</taxon>
        <taxon>Bacilli</taxon>
        <taxon>Bacillales</taxon>
        <taxon>Bacillaceae</taxon>
        <taxon>Oceanobacillus</taxon>
    </lineage>
</organism>
<protein>
    <recommendedName>
        <fullName evidence="1">Deoxyribose-phosphate aldolase 1</fullName>
        <shortName evidence="1">DERA 1</shortName>
        <ecNumber evidence="1">4.1.2.4</ecNumber>
    </recommendedName>
    <alternativeName>
        <fullName evidence="1">2-deoxy-D-ribose 5-phosphate aldolase 1</fullName>
    </alternativeName>
    <alternativeName>
        <fullName evidence="1">Phosphodeoxyriboaldolase 1</fullName>
        <shortName evidence="1">Deoxyriboaldolase 1</shortName>
    </alternativeName>
</protein>
<sequence length="221" mass="23666">MDLAKYIDHTQLKPDTTKQSIVKIVEEAKQHEFASVCVNPHWVSYCYNELKDTPVKVCTVIGFPLGATSTETKIFETNQAIADGATEVDMVINVGELKSNNDAFVEKDIRAVVEAAKGKALTKVIIETSLLTEDEKVRACKLAKNAEADYVKTSTGFSGGGATVEDIRLMRETVGPEMGVKASGGVRDLEQTEAMIEAGATRIGASSGVAIVSGEQGTSDY</sequence>
<dbReference type="EC" id="4.1.2.4" evidence="1"/>
<dbReference type="EMBL" id="BA000028">
    <property type="protein sequence ID" value="BAC13919.1"/>
    <property type="molecule type" value="Genomic_DNA"/>
</dbReference>
<dbReference type="RefSeq" id="WP_011066360.1">
    <property type="nucleotide sequence ID" value="NC_004193.1"/>
</dbReference>
<dbReference type="SMR" id="Q8EPW8"/>
<dbReference type="STRING" id="221109.gene:10734209"/>
<dbReference type="KEGG" id="oih:OB1963"/>
<dbReference type="eggNOG" id="COG0274">
    <property type="taxonomic scope" value="Bacteria"/>
</dbReference>
<dbReference type="HOGENOM" id="CLU_053595_0_1_9"/>
<dbReference type="OrthoDB" id="9778711at2"/>
<dbReference type="PhylomeDB" id="Q8EPW8"/>
<dbReference type="UniPathway" id="UPA00002">
    <property type="reaction ID" value="UER00468"/>
</dbReference>
<dbReference type="Proteomes" id="UP000000822">
    <property type="component" value="Chromosome"/>
</dbReference>
<dbReference type="GO" id="GO:0005737">
    <property type="term" value="C:cytoplasm"/>
    <property type="evidence" value="ECO:0007669"/>
    <property type="project" value="UniProtKB-SubCell"/>
</dbReference>
<dbReference type="GO" id="GO:0004139">
    <property type="term" value="F:deoxyribose-phosphate aldolase activity"/>
    <property type="evidence" value="ECO:0007669"/>
    <property type="project" value="UniProtKB-UniRule"/>
</dbReference>
<dbReference type="GO" id="GO:0006018">
    <property type="term" value="P:2-deoxyribose 1-phosphate catabolic process"/>
    <property type="evidence" value="ECO:0007669"/>
    <property type="project" value="UniProtKB-UniRule"/>
</dbReference>
<dbReference type="GO" id="GO:0016052">
    <property type="term" value="P:carbohydrate catabolic process"/>
    <property type="evidence" value="ECO:0007669"/>
    <property type="project" value="TreeGrafter"/>
</dbReference>
<dbReference type="GO" id="GO:0009264">
    <property type="term" value="P:deoxyribonucleotide catabolic process"/>
    <property type="evidence" value="ECO:0007669"/>
    <property type="project" value="InterPro"/>
</dbReference>
<dbReference type="CDD" id="cd00959">
    <property type="entry name" value="DeoC"/>
    <property type="match status" value="1"/>
</dbReference>
<dbReference type="FunFam" id="3.20.20.70:FF:000044">
    <property type="entry name" value="Deoxyribose-phosphate aldolase"/>
    <property type="match status" value="1"/>
</dbReference>
<dbReference type="Gene3D" id="3.20.20.70">
    <property type="entry name" value="Aldolase class I"/>
    <property type="match status" value="1"/>
</dbReference>
<dbReference type="HAMAP" id="MF_00114">
    <property type="entry name" value="DeoC_type1"/>
    <property type="match status" value="1"/>
</dbReference>
<dbReference type="InterPro" id="IPR013785">
    <property type="entry name" value="Aldolase_TIM"/>
</dbReference>
<dbReference type="InterPro" id="IPR011343">
    <property type="entry name" value="DeoC"/>
</dbReference>
<dbReference type="InterPro" id="IPR002915">
    <property type="entry name" value="DeoC/FbaB/LacD_aldolase"/>
</dbReference>
<dbReference type="InterPro" id="IPR028581">
    <property type="entry name" value="DeoC_typeI"/>
</dbReference>
<dbReference type="NCBIfam" id="TIGR00126">
    <property type="entry name" value="deoC"/>
    <property type="match status" value="1"/>
</dbReference>
<dbReference type="PANTHER" id="PTHR10889">
    <property type="entry name" value="DEOXYRIBOSE-PHOSPHATE ALDOLASE"/>
    <property type="match status" value="1"/>
</dbReference>
<dbReference type="PANTHER" id="PTHR10889:SF1">
    <property type="entry name" value="DEOXYRIBOSE-PHOSPHATE ALDOLASE"/>
    <property type="match status" value="1"/>
</dbReference>
<dbReference type="Pfam" id="PF01791">
    <property type="entry name" value="DeoC"/>
    <property type="match status" value="1"/>
</dbReference>
<dbReference type="PIRSF" id="PIRSF001357">
    <property type="entry name" value="DeoC"/>
    <property type="match status" value="1"/>
</dbReference>
<dbReference type="SMART" id="SM01133">
    <property type="entry name" value="DeoC"/>
    <property type="match status" value="1"/>
</dbReference>
<dbReference type="SUPFAM" id="SSF51569">
    <property type="entry name" value="Aldolase"/>
    <property type="match status" value="1"/>
</dbReference>
<evidence type="ECO:0000255" key="1">
    <source>
        <dbReference type="HAMAP-Rule" id="MF_00114"/>
    </source>
</evidence>
<evidence type="ECO:0000305" key="2"/>
<gene>
    <name evidence="1" type="primary">deoC1</name>
    <name type="synonym">dra</name>
    <name type="ordered locus">OB1963</name>
</gene>